<sequence>MVIMPFVHYIDEENFDDKLKEWTLGLNSDYVNPYDSGETQYINSNYPWPANINSLSSKICEMGLIEMDGVEIRSVPLHWVSTVSVPTAPSSSFVFNIPSMFQECMYECHIYNLPPDAGVTATYNAYFDNNFPIPYKYTLTIQTSADDMFNNQDYKIWMNGTWGPSFHIPESGTKILEFPIKYGKLNISFGISGSSLTVTLMWIIENNNINDFFDPDTEDYWQLIGRNINIVFGNFLPKHFPRGYINPIQNRTYLEKRILNTGDASNPTTIEYLWGSVTLLPDLESWQFYDDKGNSVDSKYATISDDGYVSIYYEEMIKDGYFPKAIYLWTVHKESYLEAEPSIGTFERNEESGVSERCDFDIIAFKKKYTGNLLTCVPLIVYFRPCEVPLGDINKWGWQPYIYYFDTYNVKPYCEKFIVRPKCICYRNSDPNEKTITFDIEYEINVDTKYLGWFQPELRLYYGGVLVDSKTGDVSNFTYTFRMPQNTIETYEMKLFIGGVEVAKEQIIVERQKYCHSLSIEAKTYDKEGNETDKFPHPTSADYDENKHSEIIVKIKIKDEQGNYIDVPIENIFINWQYPLNKINTGIYEVRIPNTADNALNIQDYGIAIYIDKDWCDENGYYNKYNIEAENVIINSDKIERIGLWNFEGITGYENGTTLLNQVYETVSGTFVNPICEFSVVEQLNEDRDLKQYSYCYRIYGSPMTLNLPTYTDDELKELAKAIVREMGQPRKIETFTILSKELQKINSSITVDYNGQLISMPVYSVRFSLENSNIQIQIRNDQLKLLKDYLSLIK</sequence>
<keyword id="KW-1185">Reference proteome</keyword>
<gene>
    <name type="ordered locus">MJ0348</name>
</gene>
<organism>
    <name type="scientific">Methanocaldococcus jannaschii (strain ATCC 43067 / DSM 2661 / JAL-1 / JCM 10045 / NBRC 100440)</name>
    <name type="common">Methanococcus jannaschii</name>
    <dbReference type="NCBI Taxonomy" id="243232"/>
    <lineage>
        <taxon>Archaea</taxon>
        <taxon>Methanobacteriati</taxon>
        <taxon>Methanobacteriota</taxon>
        <taxon>Methanomada group</taxon>
        <taxon>Methanococci</taxon>
        <taxon>Methanococcales</taxon>
        <taxon>Methanocaldococcaceae</taxon>
        <taxon>Methanocaldococcus</taxon>
    </lineage>
</organism>
<protein>
    <recommendedName>
        <fullName>Uncharacterized protein MJ0348</fullName>
    </recommendedName>
</protein>
<proteinExistence type="predicted"/>
<accession>Q57794</accession>
<dbReference type="EMBL" id="L77117">
    <property type="protein sequence ID" value="AAB98337.1"/>
    <property type="molecule type" value="Genomic_DNA"/>
</dbReference>
<dbReference type="PIR" id="D64343">
    <property type="entry name" value="D64343"/>
</dbReference>
<dbReference type="STRING" id="243232.MJ_0348"/>
<dbReference type="PaxDb" id="243232-MJ_0348"/>
<dbReference type="EnsemblBacteria" id="AAB98337">
    <property type="protein sequence ID" value="AAB98337"/>
    <property type="gene ID" value="MJ_0348"/>
</dbReference>
<dbReference type="KEGG" id="mja:MJ_0348"/>
<dbReference type="eggNOG" id="arCOG09651">
    <property type="taxonomic scope" value="Archaea"/>
</dbReference>
<dbReference type="HOGENOM" id="CLU_353255_0_0_2"/>
<dbReference type="InParanoid" id="Q57794"/>
<dbReference type="Proteomes" id="UP000000805">
    <property type="component" value="Chromosome"/>
</dbReference>
<name>Y348_METJA</name>
<reference key="1">
    <citation type="journal article" date="1996" name="Science">
        <title>Complete genome sequence of the methanogenic archaeon, Methanococcus jannaschii.</title>
        <authorList>
            <person name="Bult C.J."/>
            <person name="White O."/>
            <person name="Olsen G.J."/>
            <person name="Zhou L."/>
            <person name="Fleischmann R.D."/>
            <person name="Sutton G.G."/>
            <person name="Blake J.A."/>
            <person name="FitzGerald L.M."/>
            <person name="Clayton R.A."/>
            <person name="Gocayne J.D."/>
            <person name="Kerlavage A.R."/>
            <person name="Dougherty B.A."/>
            <person name="Tomb J.-F."/>
            <person name="Adams M.D."/>
            <person name="Reich C.I."/>
            <person name="Overbeek R."/>
            <person name="Kirkness E.F."/>
            <person name="Weinstock K.G."/>
            <person name="Merrick J.M."/>
            <person name="Glodek A."/>
            <person name="Scott J.L."/>
            <person name="Geoghagen N.S.M."/>
            <person name="Weidman J.F."/>
            <person name="Fuhrmann J.L."/>
            <person name="Nguyen D."/>
            <person name="Utterback T.R."/>
            <person name="Kelley J.M."/>
            <person name="Peterson J.D."/>
            <person name="Sadow P.W."/>
            <person name="Hanna M.C."/>
            <person name="Cotton M.D."/>
            <person name="Roberts K.M."/>
            <person name="Hurst M.A."/>
            <person name="Kaine B.P."/>
            <person name="Borodovsky M."/>
            <person name="Klenk H.-P."/>
            <person name="Fraser C.M."/>
            <person name="Smith H.O."/>
            <person name="Woese C.R."/>
            <person name="Venter J.C."/>
        </authorList>
    </citation>
    <scope>NUCLEOTIDE SEQUENCE [LARGE SCALE GENOMIC DNA]</scope>
    <source>
        <strain>ATCC 43067 / DSM 2661 / JAL-1 / JCM 10045 / NBRC 100440</strain>
    </source>
</reference>
<feature type="chain" id="PRO_0000106819" description="Uncharacterized protein MJ0348">
    <location>
        <begin position="1"/>
        <end position="795"/>
    </location>
</feature>